<reference key="1">
    <citation type="journal article" date="2002" name="Proc. Natl. Acad. Sci. U.S.A.">
        <title>The complete genome sequence of Chlorobium tepidum TLS, a photosynthetic, anaerobic, green-sulfur bacterium.</title>
        <authorList>
            <person name="Eisen J.A."/>
            <person name="Nelson K.E."/>
            <person name="Paulsen I.T."/>
            <person name="Heidelberg J.F."/>
            <person name="Wu M."/>
            <person name="Dodson R.J."/>
            <person name="DeBoy R.T."/>
            <person name="Gwinn M.L."/>
            <person name="Nelson W.C."/>
            <person name="Haft D.H."/>
            <person name="Hickey E.K."/>
            <person name="Peterson J.D."/>
            <person name="Durkin A.S."/>
            <person name="Kolonay J.F."/>
            <person name="Yang F."/>
            <person name="Holt I.E."/>
            <person name="Umayam L.A."/>
            <person name="Mason T.M."/>
            <person name="Brenner M."/>
            <person name="Shea T.P."/>
            <person name="Parksey D.S."/>
            <person name="Nierman W.C."/>
            <person name="Feldblyum T.V."/>
            <person name="Hansen C.L."/>
            <person name="Craven M.B."/>
            <person name="Radune D."/>
            <person name="Vamathevan J.J."/>
            <person name="Khouri H.M."/>
            <person name="White O."/>
            <person name="Gruber T.M."/>
            <person name="Ketchum K.A."/>
            <person name="Venter J.C."/>
            <person name="Tettelin H."/>
            <person name="Bryant D.A."/>
            <person name="Fraser C.M."/>
        </authorList>
    </citation>
    <scope>NUCLEOTIDE SEQUENCE [LARGE SCALE GENOMIC DNA]</scope>
    <source>
        <strain>ATCC 49652 / DSM 12025 / NBRC 103806 / TLS</strain>
    </source>
</reference>
<feature type="chain" id="PRO_0000126393" description="Small ribosomal subunit protein uS8">
    <location>
        <begin position="1"/>
        <end position="131"/>
    </location>
</feature>
<evidence type="ECO:0000255" key="1">
    <source>
        <dbReference type="HAMAP-Rule" id="MF_01302"/>
    </source>
</evidence>
<evidence type="ECO:0000305" key="2"/>
<organism>
    <name type="scientific">Chlorobaculum tepidum (strain ATCC 49652 / DSM 12025 / NBRC 103806 / TLS)</name>
    <name type="common">Chlorobium tepidum</name>
    <dbReference type="NCBI Taxonomy" id="194439"/>
    <lineage>
        <taxon>Bacteria</taxon>
        <taxon>Pseudomonadati</taxon>
        <taxon>Chlorobiota</taxon>
        <taxon>Chlorobiia</taxon>
        <taxon>Chlorobiales</taxon>
        <taxon>Chlorobiaceae</taxon>
        <taxon>Chlorobaculum</taxon>
    </lineage>
</organism>
<accession>P59031</accession>
<protein>
    <recommendedName>
        <fullName evidence="1">Small ribosomal subunit protein uS8</fullName>
    </recommendedName>
    <alternativeName>
        <fullName evidence="2">30S ribosomal protein S8</fullName>
    </alternativeName>
</protein>
<sequence>MPVTDSIADFITRIRNAGSAKNKTTDIPYTRVRENLSKLLLEKGYIKNYTVITSEQFPFIRVELKYMQDGQHAIKEISRVSKPGRRVYQGKDIKRYLGGLGLFILSTSKGILTDKEAREQNVGGEVLFRIY</sequence>
<dbReference type="EMBL" id="AE006470">
    <property type="protein sequence ID" value="AAM73391.1"/>
    <property type="molecule type" value="Genomic_DNA"/>
</dbReference>
<dbReference type="RefSeq" id="NP_663049.1">
    <property type="nucleotide sequence ID" value="NC_002932.3"/>
</dbReference>
<dbReference type="RefSeq" id="WP_010933828.1">
    <property type="nucleotide sequence ID" value="NC_002932.3"/>
</dbReference>
<dbReference type="SMR" id="P59031"/>
<dbReference type="STRING" id="194439.CT2175"/>
<dbReference type="EnsemblBacteria" id="AAM73391">
    <property type="protein sequence ID" value="AAM73391"/>
    <property type="gene ID" value="CT2175"/>
</dbReference>
<dbReference type="KEGG" id="cte:CT2175"/>
<dbReference type="PATRIC" id="fig|194439.7.peg.1974"/>
<dbReference type="eggNOG" id="COG0096">
    <property type="taxonomic scope" value="Bacteria"/>
</dbReference>
<dbReference type="HOGENOM" id="CLU_098428_0_2_10"/>
<dbReference type="OrthoDB" id="9802617at2"/>
<dbReference type="Proteomes" id="UP000001007">
    <property type="component" value="Chromosome"/>
</dbReference>
<dbReference type="GO" id="GO:1990904">
    <property type="term" value="C:ribonucleoprotein complex"/>
    <property type="evidence" value="ECO:0007669"/>
    <property type="project" value="UniProtKB-KW"/>
</dbReference>
<dbReference type="GO" id="GO:0005840">
    <property type="term" value="C:ribosome"/>
    <property type="evidence" value="ECO:0007669"/>
    <property type="project" value="UniProtKB-KW"/>
</dbReference>
<dbReference type="GO" id="GO:0019843">
    <property type="term" value="F:rRNA binding"/>
    <property type="evidence" value="ECO:0007669"/>
    <property type="project" value="UniProtKB-UniRule"/>
</dbReference>
<dbReference type="GO" id="GO:0003735">
    <property type="term" value="F:structural constituent of ribosome"/>
    <property type="evidence" value="ECO:0007669"/>
    <property type="project" value="InterPro"/>
</dbReference>
<dbReference type="GO" id="GO:0006412">
    <property type="term" value="P:translation"/>
    <property type="evidence" value="ECO:0007669"/>
    <property type="project" value="UniProtKB-UniRule"/>
</dbReference>
<dbReference type="FunFam" id="3.30.1490.10:FF:000001">
    <property type="entry name" value="30S ribosomal protein S8"/>
    <property type="match status" value="1"/>
</dbReference>
<dbReference type="Gene3D" id="3.30.1370.30">
    <property type="match status" value="1"/>
</dbReference>
<dbReference type="Gene3D" id="3.30.1490.10">
    <property type="match status" value="1"/>
</dbReference>
<dbReference type="HAMAP" id="MF_01302_B">
    <property type="entry name" value="Ribosomal_uS8_B"/>
    <property type="match status" value="1"/>
</dbReference>
<dbReference type="InterPro" id="IPR000630">
    <property type="entry name" value="Ribosomal_uS8"/>
</dbReference>
<dbReference type="InterPro" id="IPR047863">
    <property type="entry name" value="Ribosomal_uS8_CS"/>
</dbReference>
<dbReference type="InterPro" id="IPR035987">
    <property type="entry name" value="Ribosomal_uS8_sf"/>
</dbReference>
<dbReference type="NCBIfam" id="NF001109">
    <property type="entry name" value="PRK00136.1"/>
    <property type="match status" value="1"/>
</dbReference>
<dbReference type="PANTHER" id="PTHR11758">
    <property type="entry name" value="40S RIBOSOMAL PROTEIN S15A"/>
    <property type="match status" value="1"/>
</dbReference>
<dbReference type="Pfam" id="PF00410">
    <property type="entry name" value="Ribosomal_S8"/>
    <property type="match status" value="1"/>
</dbReference>
<dbReference type="SUPFAM" id="SSF56047">
    <property type="entry name" value="Ribosomal protein S8"/>
    <property type="match status" value="1"/>
</dbReference>
<dbReference type="PROSITE" id="PS00053">
    <property type="entry name" value="RIBOSOMAL_S8"/>
    <property type="match status" value="1"/>
</dbReference>
<keyword id="KW-1185">Reference proteome</keyword>
<keyword id="KW-0687">Ribonucleoprotein</keyword>
<keyword id="KW-0689">Ribosomal protein</keyword>
<keyword id="KW-0694">RNA-binding</keyword>
<keyword id="KW-0699">rRNA-binding</keyword>
<proteinExistence type="inferred from homology"/>
<name>RS8_CHLTE</name>
<comment type="function">
    <text evidence="1">One of the primary rRNA binding proteins, it binds directly to 16S rRNA central domain where it helps coordinate assembly of the platform of the 30S subunit.</text>
</comment>
<comment type="subunit">
    <text evidence="1">Part of the 30S ribosomal subunit. Contacts proteins S5 and S12.</text>
</comment>
<comment type="similarity">
    <text evidence="1">Belongs to the universal ribosomal protein uS8 family.</text>
</comment>
<gene>
    <name evidence="1" type="primary">rpsH</name>
    <name type="ordered locus">CT2175</name>
</gene>